<organism>
    <name type="scientific">Human herpesvirus 7 (strain JI)</name>
    <name type="common">HHV-7</name>
    <name type="synonym">Human T lymphotropic virus</name>
    <dbReference type="NCBI Taxonomy" id="57278"/>
    <lineage>
        <taxon>Viruses</taxon>
        <taxon>Duplodnaviria</taxon>
        <taxon>Heunggongvirae</taxon>
        <taxon>Peploviricota</taxon>
        <taxon>Herviviricetes</taxon>
        <taxon>Herpesvirales</taxon>
        <taxon>Orthoherpesviridae</taxon>
        <taxon>Betaherpesvirinae</taxon>
        <taxon>Roseolovirus</taxon>
        <taxon>Roseolovirus humanbeta7</taxon>
        <taxon>Human betaherpesvirus 7</taxon>
    </lineage>
</organism>
<sequence length="526" mass="61754">MNKVLIFDRNMYPRGVKKNVLGRQRYGLKTIKRTLVHKPANKYVSRFTKQFHRRIIPIKQLDESKLDALSLRELEQLKLIIEEKQEEKRAQTHALTFFANLPTAPFGSSYTAEALGLRKYSGEARDPAHRIRDRFPRNHEKIYLEKEELMTTDLLLRYKNCLNSLNREQHQQILGDRVFSLTNSPSLAFSLAIIEEACIYYKYHFVHNLPIDPQDLFMYTITIMKFEYFNKLNMAKLCCVFNDNGHGDIEYRIFRQLCGKPVYDRDMPNTEYEVQQQTPGSFQYPAQQALSFIVTFARILRQIKERILQTKQPQFIRDFDQDRVSEQYQCGMISRLVGDQFNNHQCDDIGCQTRIQRMMSPWKPSLYFCTYLPKEFVEFGLHPNMPEEYNSFNVACSTTPSCSFASQQSKQTVQLNLQTKKQAKCKKLLTADKTNKGQKTNELRENRLKKDWSKEVDSIDFETNTTLQEDETRFVFIENDTSMKSAKIKENNGEENSDNEMELDLDYEDVETCETDINDTDSDDSD</sequence>
<feature type="chain" id="PRO_0000115830" description="mRNA export factor ICP27 homolog">
    <location>
        <begin position="1"/>
        <end position="526"/>
    </location>
</feature>
<feature type="zinc finger region" description="CHC2-type" evidence="2">
    <location>
        <begin position="239"/>
        <end position="351"/>
    </location>
</feature>
<feature type="binding site" evidence="2">
    <location>
        <position position="239"/>
    </location>
    <ligand>
        <name>Zn(2+)</name>
        <dbReference type="ChEBI" id="CHEBI:29105"/>
    </ligand>
</feature>
<feature type="binding site" evidence="2">
    <location>
        <position position="344"/>
    </location>
    <ligand>
        <name>Zn(2+)</name>
        <dbReference type="ChEBI" id="CHEBI:29105"/>
    </ligand>
</feature>
<feature type="binding site" evidence="2">
    <location>
        <position position="346"/>
    </location>
    <ligand>
        <name>Zn(2+)</name>
        <dbReference type="ChEBI" id="CHEBI:29105"/>
    </ligand>
</feature>
<feature type="binding site" evidence="2">
    <location>
        <position position="351"/>
    </location>
    <ligand>
        <name>Zn(2+)</name>
        <dbReference type="ChEBI" id="CHEBI:29105"/>
    </ligand>
</feature>
<proteinExistence type="inferred from homology"/>
<keyword id="KW-1035">Host cytoplasm</keyword>
<keyword id="KW-1048">Host nucleus</keyword>
<keyword id="KW-0479">Metal-binding</keyword>
<keyword id="KW-1185">Reference proteome</keyword>
<keyword id="KW-0804">Transcription</keyword>
<keyword id="KW-0805">Transcription regulation</keyword>
<keyword id="KW-0946">Virion</keyword>
<keyword id="KW-0920">Virion tegument</keyword>
<keyword id="KW-0862">Zinc</keyword>
<keyword id="KW-0863">Zinc-finger</keyword>
<accession>P52355</accession>
<evidence type="ECO:0000250" key="1"/>
<evidence type="ECO:0000250" key="2">
    <source>
        <dbReference type="UniProtKB" id="P10238"/>
    </source>
</evidence>
<evidence type="ECO:0000305" key="3"/>
<comment type="function">
    <text evidence="1">Immediate early (EI) protein that plays many roles during productive infection including regulation of viral gene expression and nuclear export of intronless viral RNAs.</text>
</comment>
<comment type="subcellular location">
    <subcellularLocation>
        <location evidence="1">Virion tegument</location>
    </subcellularLocation>
    <subcellularLocation>
        <location evidence="1">Virion</location>
    </subcellularLocation>
    <subcellularLocation>
        <location>Host nucleus</location>
    </subcellularLocation>
    <subcellularLocation>
        <location>Host cytoplasm</location>
    </subcellularLocation>
    <text>Shuttles between host nucleus and cytoplasm.</text>
</comment>
<comment type="similarity">
    <text evidence="3">Belongs to the HHV-1 ICP27 protein family.</text>
</comment>
<protein>
    <recommendedName>
        <fullName>mRNA export factor ICP27 homolog</fullName>
    </recommendedName>
</protein>
<reference key="1">
    <citation type="journal article" date="1996" name="J. Virol.">
        <title>Determination and analysis of the complete nucleotide sequence of human herpesvirus.</title>
        <authorList>
            <person name="Nicholas J."/>
        </authorList>
    </citation>
    <scope>NUCLEOTIDE SEQUENCE [LARGE SCALE GENOMIC DNA]</scope>
</reference>
<gene>
    <name type="ORF">U42</name>
</gene>
<dbReference type="EMBL" id="U43400">
    <property type="protein sequence ID" value="AAC54704.1"/>
    <property type="molecule type" value="Genomic_DNA"/>
</dbReference>
<dbReference type="PIR" id="T41944">
    <property type="entry name" value="T41944"/>
</dbReference>
<dbReference type="SMR" id="P52355"/>
<dbReference type="Proteomes" id="UP000009246">
    <property type="component" value="Segment"/>
</dbReference>
<dbReference type="GO" id="GO:0030430">
    <property type="term" value="C:host cell cytoplasm"/>
    <property type="evidence" value="ECO:0007669"/>
    <property type="project" value="UniProtKB-SubCell"/>
</dbReference>
<dbReference type="GO" id="GO:0042025">
    <property type="term" value="C:host cell nucleus"/>
    <property type="evidence" value="ECO:0007669"/>
    <property type="project" value="UniProtKB-SubCell"/>
</dbReference>
<dbReference type="GO" id="GO:0019033">
    <property type="term" value="C:viral tegument"/>
    <property type="evidence" value="ECO:0007669"/>
    <property type="project" value="UniProtKB-SubCell"/>
</dbReference>
<dbReference type="GO" id="GO:0008270">
    <property type="term" value="F:zinc ion binding"/>
    <property type="evidence" value="ECO:0007669"/>
    <property type="project" value="UniProtKB-KW"/>
</dbReference>
<dbReference type="GO" id="GO:0006355">
    <property type="term" value="P:regulation of DNA-templated transcription"/>
    <property type="evidence" value="ECO:0007669"/>
    <property type="project" value="InterPro"/>
</dbReference>
<dbReference type="InterPro" id="IPR008648">
    <property type="entry name" value="ICP27-like"/>
</dbReference>
<dbReference type="Pfam" id="PF05459">
    <property type="entry name" value="Herpes_UL69"/>
    <property type="match status" value="1"/>
</dbReference>
<name>ICP27_HHV7J</name>
<organismHost>
    <name type="scientific">Homo sapiens</name>
    <name type="common">Human</name>
    <dbReference type="NCBI Taxonomy" id="9606"/>
</organismHost>